<dbReference type="EC" id="7.1.1.-" evidence="1"/>
<dbReference type="EMBL" id="AP006840">
    <property type="protein sequence ID" value="BAD40579.1"/>
    <property type="molecule type" value="Genomic_DNA"/>
</dbReference>
<dbReference type="RefSeq" id="WP_011195723.1">
    <property type="nucleotide sequence ID" value="NC_006177.1"/>
</dbReference>
<dbReference type="SMR" id="Q67P14"/>
<dbReference type="STRING" id="292459.STH1594"/>
<dbReference type="KEGG" id="sth:STH1594"/>
<dbReference type="eggNOG" id="COG1143">
    <property type="taxonomic scope" value="Bacteria"/>
</dbReference>
<dbReference type="HOGENOM" id="CLU_067218_4_3_9"/>
<dbReference type="OrthoDB" id="9803192at2"/>
<dbReference type="Proteomes" id="UP000000417">
    <property type="component" value="Chromosome"/>
</dbReference>
<dbReference type="GO" id="GO:0005886">
    <property type="term" value="C:plasma membrane"/>
    <property type="evidence" value="ECO:0007669"/>
    <property type="project" value="UniProtKB-SubCell"/>
</dbReference>
<dbReference type="GO" id="GO:0051539">
    <property type="term" value="F:4 iron, 4 sulfur cluster binding"/>
    <property type="evidence" value="ECO:0007669"/>
    <property type="project" value="UniProtKB-KW"/>
</dbReference>
<dbReference type="GO" id="GO:0005506">
    <property type="term" value="F:iron ion binding"/>
    <property type="evidence" value="ECO:0007669"/>
    <property type="project" value="UniProtKB-UniRule"/>
</dbReference>
<dbReference type="GO" id="GO:0050136">
    <property type="term" value="F:NADH:ubiquinone reductase (non-electrogenic) activity"/>
    <property type="evidence" value="ECO:0007669"/>
    <property type="project" value="UniProtKB-UniRule"/>
</dbReference>
<dbReference type="GO" id="GO:0048038">
    <property type="term" value="F:quinone binding"/>
    <property type="evidence" value="ECO:0007669"/>
    <property type="project" value="UniProtKB-KW"/>
</dbReference>
<dbReference type="GO" id="GO:0009060">
    <property type="term" value="P:aerobic respiration"/>
    <property type="evidence" value="ECO:0007669"/>
    <property type="project" value="TreeGrafter"/>
</dbReference>
<dbReference type="Gene3D" id="3.30.70.3270">
    <property type="match status" value="1"/>
</dbReference>
<dbReference type="HAMAP" id="MF_01351">
    <property type="entry name" value="NDH1_NuoI"/>
    <property type="match status" value="1"/>
</dbReference>
<dbReference type="InterPro" id="IPR017896">
    <property type="entry name" value="4Fe4S_Fe-S-bd"/>
</dbReference>
<dbReference type="InterPro" id="IPR017900">
    <property type="entry name" value="4Fe4S_Fe_S_CS"/>
</dbReference>
<dbReference type="InterPro" id="IPR010226">
    <property type="entry name" value="NADH_quinone_OxRdtase_chainI"/>
</dbReference>
<dbReference type="NCBIfam" id="TIGR01971">
    <property type="entry name" value="NuoI"/>
    <property type="match status" value="1"/>
</dbReference>
<dbReference type="NCBIfam" id="NF004537">
    <property type="entry name" value="PRK05888.1-3"/>
    <property type="match status" value="1"/>
</dbReference>
<dbReference type="NCBIfam" id="NF004538">
    <property type="entry name" value="PRK05888.1-4"/>
    <property type="match status" value="1"/>
</dbReference>
<dbReference type="PANTHER" id="PTHR10849:SF20">
    <property type="entry name" value="NADH DEHYDROGENASE [UBIQUINONE] IRON-SULFUR PROTEIN 8, MITOCHONDRIAL"/>
    <property type="match status" value="1"/>
</dbReference>
<dbReference type="PANTHER" id="PTHR10849">
    <property type="entry name" value="NADH DEHYDROGENASE UBIQUINONE IRON-SULFUR PROTEIN 8, MITOCHONDRIAL"/>
    <property type="match status" value="1"/>
</dbReference>
<dbReference type="Pfam" id="PF12838">
    <property type="entry name" value="Fer4_7"/>
    <property type="match status" value="1"/>
</dbReference>
<dbReference type="SUPFAM" id="SSF54862">
    <property type="entry name" value="4Fe-4S ferredoxins"/>
    <property type="match status" value="1"/>
</dbReference>
<dbReference type="PROSITE" id="PS00198">
    <property type="entry name" value="4FE4S_FER_1"/>
    <property type="match status" value="2"/>
</dbReference>
<dbReference type="PROSITE" id="PS51379">
    <property type="entry name" value="4FE4S_FER_2"/>
    <property type="match status" value="2"/>
</dbReference>
<keyword id="KW-0004">4Fe-4S</keyword>
<keyword id="KW-1003">Cell membrane</keyword>
<keyword id="KW-0408">Iron</keyword>
<keyword id="KW-0411">Iron-sulfur</keyword>
<keyword id="KW-0472">Membrane</keyword>
<keyword id="KW-0479">Metal-binding</keyword>
<keyword id="KW-0520">NAD</keyword>
<keyword id="KW-0874">Quinone</keyword>
<keyword id="KW-1185">Reference proteome</keyword>
<keyword id="KW-0677">Repeat</keyword>
<keyword id="KW-1278">Translocase</keyword>
<keyword id="KW-0830">Ubiquinone</keyword>
<accession>Q67P14</accession>
<reference key="1">
    <citation type="journal article" date="2004" name="Nucleic Acids Res.">
        <title>Genome sequence of Symbiobacterium thermophilum, an uncultivable bacterium that depends on microbial commensalism.</title>
        <authorList>
            <person name="Ueda K."/>
            <person name="Yamashita A."/>
            <person name="Ishikawa J."/>
            <person name="Shimada M."/>
            <person name="Watsuji T."/>
            <person name="Morimura K."/>
            <person name="Ikeda H."/>
            <person name="Hattori M."/>
            <person name="Beppu T."/>
        </authorList>
    </citation>
    <scope>NUCLEOTIDE SEQUENCE [LARGE SCALE GENOMIC DNA]</scope>
    <source>
        <strain>DSM 24528 / JCM 14929 / IAM 14863 / T</strain>
    </source>
</reference>
<name>NUOI1_SYMTH</name>
<gene>
    <name evidence="1" type="primary">nuoI1</name>
    <name type="ordered locus">STH1594</name>
</gene>
<proteinExistence type="inferred from homology"/>
<organism>
    <name type="scientific">Symbiobacterium thermophilum (strain DSM 24528 / JCM 14929 / IAM 14863 / T)</name>
    <dbReference type="NCBI Taxonomy" id="292459"/>
    <lineage>
        <taxon>Bacteria</taxon>
        <taxon>Bacillati</taxon>
        <taxon>Bacillota</taxon>
        <taxon>Clostridia</taxon>
        <taxon>Eubacteriales</taxon>
        <taxon>Symbiobacteriaceae</taxon>
        <taxon>Symbiobacterium</taxon>
    </lineage>
</organism>
<protein>
    <recommendedName>
        <fullName evidence="1">NADH-quinone oxidoreductase subunit I 1</fullName>
        <ecNumber evidence="1">7.1.1.-</ecNumber>
    </recommendedName>
    <alternativeName>
        <fullName evidence="1">NADH dehydrogenase I subunit I 1</fullName>
    </alternativeName>
    <alternativeName>
        <fullName evidence="1">NDH-1 subunit I 1</fullName>
    </alternativeName>
</protein>
<sequence length="162" mass="18288">MNGVAAIAKGMATTLKVLFRKPVTVDYPYVKRPRAPRFRGRHELRTYENGLEMCVGCELCQVACPAAAITVQAAENDPDNPHSPGERYGYKYQVDLLRCIFCGMCEEACPTDCLHLTQEFELADFTRESLILQKEQLVNRNPSGFKVPMNVYPPFRRKAVNA</sequence>
<evidence type="ECO:0000255" key="1">
    <source>
        <dbReference type="HAMAP-Rule" id="MF_01351"/>
    </source>
</evidence>
<feature type="chain" id="PRO_0000245752" description="NADH-quinone oxidoreductase subunit I 1">
    <location>
        <begin position="1"/>
        <end position="162"/>
    </location>
</feature>
<feature type="domain" description="4Fe-4S ferredoxin-type 1" evidence="1">
    <location>
        <begin position="44"/>
        <end position="74"/>
    </location>
</feature>
<feature type="domain" description="4Fe-4S ferredoxin-type 2" evidence="1">
    <location>
        <begin position="90"/>
        <end position="119"/>
    </location>
</feature>
<feature type="binding site" evidence="1">
    <location>
        <position position="54"/>
    </location>
    <ligand>
        <name>[4Fe-4S] cluster</name>
        <dbReference type="ChEBI" id="CHEBI:49883"/>
        <label>1</label>
    </ligand>
</feature>
<feature type="binding site" evidence="1">
    <location>
        <position position="57"/>
    </location>
    <ligand>
        <name>[4Fe-4S] cluster</name>
        <dbReference type="ChEBI" id="CHEBI:49883"/>
        <label>1</label>
    </ligand>
</feature>
<feature type="binding site" evidence="1">
    <location>
        <position position="60"/>
    </location>
    <ligand>
        <name>[4Fe-4S] cluster</name>
        <dbReference type="ChEBI" id="CHEBI:49883"/>
        <label>1</label>
    </ligand>
</feature>
<feature type="binding site" evidence="1">
    <location>
        <position position="64"/>
    </location>
    <ligand>
        <name>[4Fe-4S] cluster</name>
        <dbReference type="ChEBI" id="CHEBI:49883"/>
        <label>2</label>
    </ligand>
</feature>
<feature type="binding site" evidence="1">
    <location>
        <position position="99"/>
    </location>
    <ligand>
        <name>[4Fe-4S] cluster</name>
        <dbReference type="ChEBI" id="CHEBI:49883"/>
        <label>2</label>
    </ligand>
</feature>
<feature type="binding site" evidence="1">
    <location>
        <position position="102"/>
    </location>
    <ligand>
        <name>[4Fe-4S] cluster</name>
        <dbReference type="ChEBI" id="CHEBI:49883"/>
        <label>2</label>
    </ligand>
</feature>
<feature type="binding site" evidence="1">
    <location>
        <position position="105"/>
    </location>
    <ligand>
        <name>[4Fe-4S] cluster</name>
        <dbReference type="ChEBI" id="CHEBI:49883"/>
        <label>2</label>
    </ligand>
</feature>
<feature type="binding site" evidence="1">
    <location>
        <position position="109"/>
    </location>
    <ligand>
        <name>[4Fe-4S] cluster</name>
        <dbReference type="ChEBI" id="CHEBI:49883"/>
        <label>1</label>
    </ligand>
</feature>
<comment type="function">
    <text evidence="1">NDH-1 shuttles electrons from NADH, via FMN and iron-sulfur (Fe-S) centers, to quinones in the respiratory chain. The immediate electron acceptor for the enzyme in this species is believed to be ubiquinone. Couples the redox reaction to proton translocation (for every two electrons transferred, four hydrogen ions are translocated across the cytoplasmic membrane), and thus conserves the redox energy in a proton gradient.</text>
</comment>
<comment type="catalytic activity">
    <reaction evidence="1">
        <text>a quinone + NADH + 5 H(+)(in) = a quinol + NAD(+) + 4 H(+)(out)</text>
        <dbReference type="Rhea" id="RHEA:57888"/>
        <dbReference type="ChEBI" id="CHEBI:15378"/>
        <dbReference type="ChEBI" id="CHEBI:24646"/>
        <dbReference type="ChEBI" id="CHEBI:57540"/>
        <dbReference type="ChEBI" id="CHEBI:57945"/>
        <dbReference type="ChEBI" id="CHEBI:132124"/>
    </reaction>
</comment>
<comment type="cofactor">
    <cofactor evidence="1">
        <name>[4Fe-4S] cluster</name>
        <dbReference type="ChEBI" id="CHEBI:49883"/>
    </cofactor>
    <text evidence="1">Binds 2 [4Fe-4S] clusters per subunit.</text>
</comment>
<comment type="subunit">
    <text evidence="1">NDH-1 is composed of 14 different subunits. Subunits NuoA, H, J, K, L, M, N constitute the membrane sector of the complex.</text>
</comment>
<comment type="subcellular location">
    <subcellularLocation>
        <location evidence="1">Cell membrane</location>
        <topology evidence="1">Peripheral membrane protein</topology>
    </subcellularLocation>
</comment>
<comment type="similarity">
    <text evidence="1">Belongs to the complex I 23 kDa subunit family.</text>
</comment>